<dbReference type="EMBL" id="CP000948">
    <property type="protein sequence ID" value="ACB02282.1"/>
    <property type="molecule type" value="Genomic_DNA"/>
</dbReference>
<dbReference type="RefSeq" id="WP_000290727.1">
    <property type="nucleotide sequence ID" value="NC_010473.1"/>
</dbReference>
<dbReference type="SMR" id="B1X9Z9"/>
<dbReference type="GeneID" id="93776319"/>
<dbReference type="KEGG" id="ecd:ECDH10B_1161"/>
<dbReference type="HOGENOM" id="CLU_129084_2_1_6"/>
<dbReference type="GO" id="GO:0015934">
    <property type="term" value="C:large ribosomal subunit"/>
    <property type="evidence" value="ECO:0007669"/>
    <property type="project" value="InterPro"/>
</dbReference>
<dbReference type="GO" id="GO:0003735">
    <property type="term" value="F:structural constituent of ribosome"/>
    <property type="evidence" value="ECO:0007669"/>
    <property type="project" value="InterPro"/>
</dbReference>
<dbReference type="GO" id="GO:0006412">
    <property type="term" value="P:translation"/>
    <property type="evidence" value="ECO:0007669"/>
    <property type="project" value="UniProtKB-UniRule"/>
</dbReference>
<dbReference type="HAMAP" id="MF_00340">
    <property type="entry name" value="Ribosomal_bL32"/>
    <property type="match status" value="1"/>
</dbReference>
<dbReference type="InterPro" id="IPR002677">
    <property type="entry name" value="Ribosomal_bL32"/>
</dbReference>
<dbReference type="InterPro" id="IPR044957">
    <property type="entry name" value="Ribosomal_bL32_bact"/>
</dbReference>
<dbReference type="InterPro" id="IPR011332">
    <property type="entry name" value="Ribosomal_zn-bd"/>
</dbReference>
<dbReference type="NCBIfam" id="TIGR01031">
    <property type="entry name" value="rpmF_bact"/>
    <property type="match status" value="1"/>
</dbReference>
<dbReference type="PANTHER" id="PTHR35534">
    <property type="entry name" value="50S RIBOSOMAL PROTEIN L32"/>
    <property type="match status" value="1"/>
</dbReference>
<dbReference type="PANTHER" id="PTHR35534:SF1">
    <property type="entry name" value="LARGE RIBOSOMAL SUBUNIT PROTEIN BL32"/>
    <property type="match status" value="1"/>
</dbReference>
<dbReference type="Pfam" id="PF01783">
    <property type="entry name" value="Ribosomal_L32p"/>
    <property type="match status" value="1"/>
</dbReference>
<dbReference type="SUPFAM" id="SSF57829">
    <property type="entry name" value="Zn-binding ribosomal proteins"/>
    <property type="match status" value="1"/>
</dbReference>
<comment type="similarity">
    <text evidence="1">Belongs to the bacterial ribosomal protein bL32 family.</text>
</comment>
<proteinExistence type="inferred from homology"/>
<reference key="1">
    <citation type="journal article" date="2008" name="J. Bacteriol.">
        <title>The complete genome sequence of Escherichia coli DH10B: insights into the biology of a laboratory workhorse.</title>
        <authorList>
            <person name="Durfee T."/>
            <person name="Nelson R."/>
            <person name="Baldwin S."/>
            <person name="Plunkett G. III"/>
            <person name="Burland V."/>
            <person name="Mau B."/>
            <person name="Petrosino J.F."/>
            <person name="Qin X."/>
            <person name="Muzny D.M."/>
            <person name="Ayele M."/>
            <person name="Gibbs R.A."/>
            <person name="Csorgo B."/>
            <person name="Posfai G."/>
            <person name="Weinstock G.M."/>
            <person name="Blattner F.R."/>
        </authorList>
    </citation>
    <scope>NUCLEOTIDE SEQUENCE [LARGE SCALE GENOMIC DNA]</scope>
    <source>
        <strain>K12 / DH10B</strain>
    </source>
</reference>
<evidence type="ECO:0000255" key="1">
    <source>
        <dbReference type="HAMAP-Rule" id="MF_00340"/>
    </source>
</evidence>
<evidence type="ECO:0000256" key="2">
    <source>
        <dbReference type="SAM" id="MobiDB-lite"/>
    </source>
</evidence>
<evidence type="ECO:0000305" key="3"/>
<organism>
    <name type="scientific">Escherichia coli (strain K12 / DH10B)</name>
    <dbReference type="NCBI Taxonomy" id="316385"/>
    <lineage>
        <taxon>Bacteria</taxon>
        <taxon>Pseudomonadati</taxon>
        <taxon>Pseudomonadota</taxon>
        <taxon>Gammaproteobacteria</taxon>
        <taxon>Enterobacterales</taxon>
        <taxon>Enterobacteriaceae</taxon>
        <taxon>Escherichia</taxon>
    </lineage>
</organism>
<name>RL32_ECODH</name>
<gene>
    <name evidence="1" type="primary">rpmF</name>
    <name type="ordered locus">ECDH10B_1161</name>
</gene>
<accession>B1X9Z9</accession>
<feature type="chain" id="PRO_1000120120" description="Large ribosomal subunit protein bL32">
    <location>
        <begin position="1"/>
        <end position="57"/>
    </location>
</feature>
<feature type="region of interest" description="Disordered" evidence="2">
    <location>
        <begin position="1"/>
        <end position="38"/>
    </location>
</feature>
<protein>
    <recommendedName>
        <fullName evidence="1">Large ribosomal subunit protein bL32</fullName>
    </recommendedName>
    <alternativeName>
        <fullName evidence="3">50S ribosomal protein L32</fullName>
    </alternativeName>
</protein>
<keyword id="KW-0687">Ribonucleoprotein</keyword>
<keyword id="KW-0689">Ribosomal protein</keyword>
<sequence length="57" mass="6446">MAVQQNKPTRSKRGMRRSHDALTAVTSLSVDKTSGEKHLRHHITADGYYRGRKVIAK</sequence>